<accession>C3YFB4</accession>
<protein>
    <recommendedName>
        <fullName evidence="1">Anamorsin homolog</fullName>
    </recommendedName>
    <alternativeName>
        <fullName evidence="1">Fe-S cluster assembly protein DRE2 homolog</fullName>
    </alternativeName>
</protein>
<comment type="function">
    <text evidence="1">Component of the cytosolic iron-sulfur (Fe-S) protein assembly (CIA) machinery. Required for the maturation of extramitochondrial Fe-S proteins. Part of an electron transfer chain functioning in an early step of cytosolic Fe-S biogenesis, facilitating the de novo assembly of a [4Fe-4S] cluster on the cytosolic Fe-S scaffold complex. Electrons are transferred from NADPH via a FAD- and FMN-containing diflavin oxidoreductase. Together with the diflavin oxidoreductase, also required for the assembly of the diferric tyrosyl radical cofactor of ribonucleotide reductase (RNR), probably by providing electrons for reduction during radical cofactor maturation in the catalytic small subunit.</text>
</comment>
<comment type="cofactor">
    <cofactor evidence="1">
        <name>[2Fe-2S] cluster</name>
        <dbReference type="ChEBI" id="CHEBI:190135"/>
    </cofactor>
</comment>
<comment type="cofactor">
    <cofactor evidence="1">
        <name>[4Fe-4S] cluster</name>
        <dbReference type="ChEBI" id="CHEBI:49883"/>
    </cofactor>
</comment>
<comment type="subunit">
    <text evidence="1">Monomer.</text>
</comment>
<comment type="subcellular location">
    <subcellularLocation>
        <location evidence="1">Cytoplasm</location>
    </subcellularLocation>
    <subcellularLocation>
        <location evidence="1">Mitochondrion intermembrane space</location>
    </subcellularLocation>
</comment>
<comment type="domain">
    <text evidence="1">The C-terminal domain binds 2 Fe-S clusters but is otherwise mostly in an intrinsically disordered conformation.</text>
</comment>
<comment type="domain">
    <text evidence="1">The N-terminal domain has structural similarity with S-adenosyl-L-methionine-dependent methyltransferases, but does not bind S-adenosyl-L-methionine. It is required for correct assembly of the 2 Fe-S clusters.</text>
</comment>
<comment type="domain">
    <text evidence="1">The twin Cx2C motifs are involved in the recognition by the mitochondrial MIA40-ERV1 disulfide relay system. The formation of 2 disulfide bonds in the Cx2C motifs through dithiol/disulfide exchange reactions effectively traps the protein in the mitochondrial intermembrane space.</text>
</comment>
<comment type="similarity">
    <text evidence="1">Belongs to the anamorsin family.</text>
</comment>
<reference key="1">
    <citation type="journal article" date="2008" name="Nature">
        <title>The amphioxus genome and the evolution of the chordate karyotype.</title>
        <authorList>
            <person name="Putnam N.H."/>
            <person name="Butts T."/>
            <person name="Ferrier D.E.K."/>
            <person name="Furlong R.F."/>
            <person name="Hellsten U."/>
            <person name="Kawashima T."/>
            <person name="Robinson-Rechavi M."/>
            <person name="Shoguchi E."/>
            <person name="Terry A."/>
            <person name="Yu J.-K."/>
            <person name="Benito-Gutierrez E.L."/>
            <person name="Dubchak I."/>
            <person name="Garcia-Fernandez J."/>
            <person name="Gibson-Brown J.J."/>
            <person name="Grigoriev I.V."/>
            <person name="Horton A.C."/>
            <person name="de Jong P.J."/>
            <person name="Jurka J."/>
            <person name="Kapitonov V.V."/>
            <person name="Kohara Y."/>
            <person name="Kuroki Y."/>
            <person name="Lindquist E."/>
            <person name="Lucas S."/>
            <person name="Osoegawa K."/>
            <person name="Pennacchio L.A."/>
            <person name="Salamov A.A."/>
            <person name="Satou Y."/>
            <person name="Sauka-Spengler T."/>
            <person name="Schmutz J."/>
            <person name="Shin-I T."/>
            <person name="Toyoda A."/>
            <person name="Bronner-Fraser M."/>
            <person name="Fujiyama A."/>
            <person name="Holland L.Z."/>
            <person name="Holland P.W.H."/>
            <person name="Satoh N."/>
            <person name="Rokhsar D.S."/>
        </authorList>
    </citation>
    <scope>NUCLEOTIDE SEQUENCE [LARGE SCALE GENOMIC DNA]</scope>
    <source>
        <strain>S238N-H82</strain>
        <tissue>Testis</tissue>
    </source>
</reference>
<sequence>MDYVSPGHSVLLLWGGAVSGDTIQTTVGNLQTKVGEKGHVRVEHVDRLLLSNHGSSTFDVVMSGTINPPTTVHSGDVLAEVARLLKPSGRAVVCEPTVSTDNGGTLRTAAKLSSSLKLAGLVSVSEAKEVSLSQQEHDLLKQALSVDGIQVVEVSASKPSYEVGSSAQLTLSFAKKKQVEKPKLDENTAKIWSLSAVDMNDDDIDLLDPDELLDEEDLKKPDPASLKAQCGTGGDTKKRKACKNCTCGLAEELEGDQPGKTASKPATSACGNCYLGDAFRCASCPYLGMPAFKPGEKITLTDRQLKGDI</sequence>
<gene>
    <name type="ORF">BRAFLDRAFT_58504</name>
</gene>
<feature type="chain" id="PRO_0000392309" description="Anamorsin homolog">
    <location>
        <begin position="1"/>
        <end position="309"/>
    </location>
</feature>
<feature type="region of interest" description="N-terminal SAM-like domain" evidence="1">
    <location>
        <begin position="4"/>
        <end position="169"/>
    </location>
</feature>
<feature type="region of interest" description="Linker" evidence="1">
    <location>
        <begin position="170"/>
        <end position="218"/>
    </location>
</feature>
<feature type="region of interest" description="Fe-S binding site A" evidence="1">
    <location>
        <begin position="230"/>
        <end position="247"/>
    </location>
</feature>
<feature type="region of interest" description="Fe-S binding site B" evidence="1">
    <location>
        <begin position="270"/>
        <end position="284"/>
    </location>
</feature>
<feature type="short sequence motif" description="Cx2C motif 1" evidence="1">
    <location>
        <begin position="270"/>
        <end position="273"/>
    </location>
</feature>
<feature type="short sequence motif" description="Cx2C motif 2" evidence="1">
    <location>
        <begin position="281"/>
        <end position="284"/>
    </location>
</feature>
<feature type="binding site" evidence="1">
    <location>
        <position position="230"/>
    </location>
    <ligand>
        <name>[2Fe-2S] cluster</name>
        <dbReference type="ChEBI" id="CHEBI:190135"/>
    </ligand>
</feature>
<feature type="binding site" evidence="1">
    <location>
        <position position="242"/>
    </location>
    <ligand>
        <name>[2Fe-2S] cluster</name>
        <dbReference type="ChEBI" id="CHEBI:190135"/>
    </ligand>
</feature>
<feature type="binding site" evidence="1">
    <location>
        <position position="245"/>
    </location>
    <ligand>
        <name>[2Fe-2S] cluster</name>
        <dbReference type="ChEBI" id="CHEBI:190135"/>
    </ligand>
</feature>
<feature type="binding site" evidence="1">
    <location>
        <position position="247"/>
    </location>
    <ligand>
        <name>[2Fe-2S] cluster</name>
        <dbReference type="ChEBI" id="CHEBI:190135"/>
    </ligand>
</feature>
<feature type="binding site" evidence="1">
    <location>
        <position position="270"/>
    </location>
    <ligand>
        <name>[4Fe-4S] cluster</name>
        <dbReference type="ChEBI" id="CHEBI:49883"/>
    </ligand>
</feature>
<feature type="binding site" evidence="1">
    <location>
        <position position="273"/>
    </location>
    <ligand>
        <name>[4Fe-4S] cluster</name>
        <dbReference type="ChEBI" id="CHEBI:49883"/>
    </ligand>
</feature>
<feature type="binding site" evidence="1">
    <location>
        <position position="281"/>
    </location>
    <ligand>
        <name>[4Fe-4S] cluster</name>
        <dbReference type="ChEBI" id="CHEBI:49883"/>
    </ligand>
</feature>
<feature type="binding site" evidence="1">
    <location>
        <position position="284"/>
    </location>
    <ligand>
        <name>[4Fe-4S] cluster</name>
        <dbReference type="ChEBI" id="CHEBI:49883"/>
    </ligand>
</feature>
<evidence type="ECO:0000255" key="1">
    <source>
        <dbReference type="HAMAP-Rule" id="MF_03115"/>
    </source>
</evidence>
<organism>
    <name type="scientific">Branchiostoma floridae</name>
    <name type="common">Florida lancelet</name>
    <name type="synonym">Amphioxus</name>
    <dbReference type="NCBI Taxonomy" id="7739"/>
    <lineage>
        <taxon>Eukaryota</taxon>
        <taxon>Metazoa</taxon>
        <taxon>Chordata</taxon>
        <taxon>Cephalochordata</taxon>
        <taxon>Leptocardii</taxon>
        <taxon>Amphioxiformes</taxon>
        <taxon>Branchiostomatidae</taxon>
        <taxon>Branchiostoma</taxon>
    </lineage>
</organism>
<name>DRE2_BRAFL</name>
<keyword id="KW-0001">2Fe-2S</keyword>
<keyword id="KW-0004">4Fe-4S</keyword>
<keyword id="KW-0963">Cytoplasm</keyword>
<keyword id="KW-0408">Iron</keyword>
<keyword id="KW-0411">Iron-sulfur</keyword>
<keyword id="KW-0479">Metal-binding</keyword>
<keyword id="KW-0496">Mitochondrion</keyword>
<keyword id="KW-1185">Reference proteome</keyword>
<proteinExistence type="inferred from homology"/>
<dbReference type="EMBL" id="GG666509">
    <property type="protein sequence ID" value="EEN60877.1"/>
    <property type="molecule type" value="Genomic_DNA"/>
</dbReference>
<dbReference type="RefSeq" id="XP_002604867.1">
    <property type="nucleotide sequence ID" value="XM_002604821.1"/>
</dbReference>
<dbReference type="SMR" id="C3YFB4"/>
<dbReference type="FunCoup" id="C3YFB4">
    <property type="interactions" value="845"/>
</dbReference>
<dbReference type="STRING" id="7739.C3YFB4"/>
<dbReference type="eggNOG" id="KOG4020">
    <property type="taxonomic scope" value="Eukaryota"/>
</dbReference>
<dbReference type="InParanoid" id="C3YFB4"/>
<dbReference type="Proteomes" id="UP000001554">
    <property type="component" value="Unplaced"/>
</dbReference>
<dbReference type="GO" id="GO:0005737">
    <property type="term" value="C:cytoplasm"/>
    <property type="evidence" value="ECO:0000318"/>
    <property type="project" value="GO_Central"/>
</dbReference>
<dbReference type="GO" id="GO:0005758">
    <property type="term" value="C:mitochondrial intermembrane space"/>
    <property type="evidence" value="ECO:0007669"/>
    <property type="project" value="UniProtKB-SubCell"/>
</dbReference>
<dbReference type="GO" id="GO:0051537">
    <property type="term" value="F:2 iron, 2 sulfur cluster binding"/>
    <property type="evidence" value="ECO:0007669"/>
    <property type="project" value="UniProtKB-UniRule"/>
</dbReference>
<dbReference type="GO" id="GO:0051539">
    <property type="term" value="F:4 iron, 4 sulfur cluster binding"/>
    <property type="evidence" value="ECO:0007669"/>
    <property type="project" value="UniProtKB-KW"/>
</dbReference>
<dbReference type="GO" id="GO:0009055">
    <property type="term" value="F:electron transfer activity"/>
    <property type="evidence" value="ECO:0007669"/>
    <property type="project" value="UniProtKB-UniRule"/>
</dbReference>
<dbReference type="GO" id="GO:0046872">
    <property type="term" value="F:metal ion binding"/>
    <property type="evidence" value="ECO:0007669"/>
    <property type="project" value="UniProtKB-KW"/>
</dbReference>
<dbReference type="GO" id="GO:0016226">
    <property type="term" value="P:iron-sulfur cluster assembly"/>
    <property type="evidence" value="ECO:0000318"/>
    <property type="project" value="GO_Central"/>
</dbReference>
<dbReference type="FunFam" id="3.40.50.150:FF:000085">
    <property type="entry name" value="Anamorsin homolog"/>
    <property type="match status" value="1"/>
</dbReference>
<dbReference type="Gene3D" id="3.40.50.150">
    <property type="entry name" value="Vaccinia Virus protein VP39"/>
    <property type="match status" value="1"/>
</dbReference>
<dbReference type="HAMAP" id="MF_03115">
    <property type="entry name" value="Anamorsin"/>
    <property type="match status" value="1"/>
</dbReference>
<dbReference type="InterPro" id="IPR007785">
    <property type="entry name" value="Anamorsin"/>
</dbReference>
<dbReference type="InterPro" id="IPR049011">
    <property type="entry name" value="Anamorsin_N_metazoan"/>
</dbReference>
<dbReference type="InterPro" id="IPR046408">
    <property type="entry name" value="CIAPIN1"/>
</dbReference>
<dbReference type="InterPro" id="IPR029063">
    <property type="entry name" value="SAM-dependent_MTases_sf"/>
</dbReference>
<dbReference type="PANTHER" id="PTHR13273">
    <property type="entry name" value="ANAMORSIN"/>
    <property type="match status" value="1"/>
</dbReference>
<dbReference type="PANTHER" id="PTHR13273:SF14">
    <property type="entry name" value="ANAMORSIN"/>
    <property type="match status" value="1"/>
</dbReference>
<dbReference type="Pfam" id="PF20922">
    <property type="entry name" value="Anamorsin_N"/>
    <property type="match status" value="1"/>
</dbReference>
<dbReference type="Pfam" id="PF05093">
    <property type="entry name" value="CIAPIN1"/>
    <property type="match status" value="2"/>
</dbReference>
<dbReference type="SUPFAM" id="SSF53335">
    <property type="entry name" value="S-adenosyl-L-methionine-dependent methyltransferases"/>
    <property type="match status" value="1"/>
</dbReference>